<evidence type="ECO:0000255" key="1">
    <source>
        <dbReference type="HAMAP-Rule" id="MF_01342"/>
    </source>
</evidence>
<evidence type="ECO:0000256" key="2">
    <source>
        <dbReference type="SAM" id="MobiDB-lite"/>
    </source>
</evidence>
<evidence type="ECO:0000305" key="3"/>
<reference key="1">
    <citation type="journal article" date="2002" name="Proc. Natl. Acad. Sci. U.S.A.">
        <title>The complete genome sequence of Chlorobium tepidum TLS, a photosynthetic, anaerobic, green-sulfur bacterium.</title>
        <authorList>
            <person name="Eisen J.A."/>
            <person name="Nelson K.E."/>
            <person name="Paulsen I.T."/>
            <person name="Heidelberg J.F."/>
            <person name="Wu M."/>
            <person name="Dodson R.J."/>
            <person name="DeBoy R.T."/>
            <person name="Gwinn M.L."/>
            <person name="Nelson W.C."/>
            <person name="Haft D.H."/>
            <person name="Hickey E.K."/>
            <person name="Peterson J.D."/>
            <person name="Durkin A.S."/>
            <person name="Kolonay J.F."/>
            <person name="Yang F."/>
            <person name="Holt I.E."/>
            <person name="Umayam L.A."/>
            <person name="Mason T.M."/>
            <person name="Brenner M."/>
            <person name="Shea T.P."/>
            <person name="Parksey D.S."/>
            <person name="Nierman W.C."/>
            <person name="Feldblyum T.V."/>
            <person name="Hansen C.L."/>
            <person name="Craven M.B."/>
            <person name="Radune D."/>
            <person name="Vamathevan J.J."/>
            <person name="Khouri H.M."/>
            <person name="White O."/>
            <person name="Gruber T.M."/>
            <person name="Ketchum K.A."/>
            <person name="Venter J.C."/>
            <person name="Tettelin H."/>
            <person name="Bryant D.A."/>
            <person name="Fraser C.M."/>
        </authorList>
    </citation>
    <scope>NUCLEOTIDE SEQUENCE [LARGE SCALE GENOMIC DNA]</scope>
    <source>
        <strain>ATCC 49652 / DSM 12025 / NBRC 103806 / TLS</strain>
    </source>
</reference>
<protein>
    <recommendedName>
        <fullName evidence="1">Large ribosomal subunit protein uL16</fullName>
    </recommendedName>
    <alternativeName>
        <fullName evidence="3">50S ribosomal protein L16</fullName>
    </alternativeName>
</protein>
<keyword id="KW-1185">Reference proteome</keyword>
<keyword id="KW-0687">Ribonucleoprotein</keyword>
<keyword id="KW-0689">Ribosomal protein</keyword>
<keyword id="KW-0694">RNA-binding</keyword>
<keyword id="KW-0699">rRNA-binding</keyword>
<keyword id="KW-0820">tRNA-binding</keyword>
<sequence length="139" mass="15787">MLMPKRVQYRKTQRGRMKGNAQRGTAVTFGSFGLKAMEPAWITSRQIEAARIAMNRYMKRDGKIWIRIFPDKPVSKKPAETRMGSGKGSPEFWVAVVKPGRVMFEADGVPREVAVEAFRLAAKKLPIKTKFIVRPDYEG</sequence>
<organism>
    <name type="scientific">Chlorobaculum tepidum (strain ATCC 49652 / DSM 12025 / NBRC 103806 / TLS)</name>
    <name type="common">Chlorobium tepidum</name>
    <dbReference type="NCBI Taxonomy" id="194439"/>
    <lineage>
        <taxon>Bacteria</taxon>
        <taxon>Pseudomonadati</taxon>
        <taxon>Chlorobiota</taxon>
        <taxon>Chlorobiia</taxon>
        <taxon>Chlorobiales</taxon>
        <taxon>Chlorobiaceae</taxon>
        <taxon>Chlorobaculum</taxon>
    </lineage>
</organism>
<gene>
    <name evidence="1" type="primary">rplP</name>
    <name type="ordered locus">CT2182</name>
</gene>
<accession>Q8KAH9</accession>
<comment type="function">
    <text evidence="1">Binds 23S rRNA and is also seen to make contacts with the A and possibly P site tRNAs.</text>
</comment>
<comment type="subunit">
    <text evidence="1">Part of the 50S ribosomal subunit.</text>
</comment>
<comment type="similarity">
    <text evidence="1">Belongs to the universal ribosomal protein uL16 family.</text>
</comment>
<feature type="chain" id="PRO_0000062079" description="Large ribosomal subunit protein uL16">
    <location>
        <begin position="1"/>
        <end position="139"/>
    </location>
</feature>
<feature type="region of interest" description="Disordered" evidence="2">
    <location>
        <begin position="1"/>
        <end position="21"/>
    </location>
</feature>
<feature type="compositionally biased region" description="Basic residues" evidence="2">
    <location>
        <begin position="7"/>
        <end position="17"/>
    </location>
</feature>
<proteinExistence type="inferred from homology"/>
<name>RL16_CHLTE</name>
<dbReference type="EMBL" id="AE006470">
    <property type="protein sequence ID" value="AAM73398.1"/>
    <property type="molecule type" value="Genomic_DNA"/>
</dbReference>
<dbReference type="RefSeq" id="NP_663056.1">
    <property type="nucleotide sequence ID" value="NC_002932.3"/>
</dbReference>
<dbReference type="RefSeq" id="WP_010933835.1">
    <property type="nucleotide sequence ID" value="NC_002932.3"/>
</dbReference>
<dbReference type="SMR" id="Q8KAH9"/>
<dbReference type="STRING" id="194439.CT2182"/>
<dbReference type="EnsemblBacteria" id="AAM73398">
    <property type="protein sequence ID" value="AAM73398"/>
    <property type="gene ID" value="CT2182"/>
</dbReference>
<dbReference type="KEGG" id="cte:CT2182"/>
<dbReference type="PATRIC" id="fig|194439.7.peg.1981"/>
<dbReference type="eggNOG" id="COG0197">
    <property type="taxonomic scope" value="Bacteria"/>
</dbReference>
<dbReference type="HOGENOM" id="CLU_078858_2_1_10"/>
<dbReference type="OrthoDB" id="9802589at2"/>
<dbReference type="Proteomes" id="UP000001007">
    <property type="component" value="Chromosome"/>
</dbReference>
<dbReference type="GO" id="GO:0022625">
    <property type="term" value="C:cytosolic large ribosomal subunit"/>
    <property type="evidence" value="ECO:0007669"/>
    <property type="project" value="TreeGrafter"/>
</dbReference>
<dbReference type="GO" id="GO:0019843">
    <property type="term" value="F:rRNA binding"/>
    <property type="evidence" value="ECO:0007669"/>
    <property type="project" value="UniProtKB-UniRule"/>
</dbReference>
<dbReference type="GO" id="GO:0003735">
    <property type="term" value="F:structural constituent of ribosome"/>
    <property type="evidence" value="ECO:0007669"/>
    <property type="project" value="InterPro"/>
</dbReference>
<dbReference type="GO" id="GO:0000049">
    <property type="term" value="F:tRNA binding"/>
    <property type="evidence" value="ECO:0007669"/>
    <property type="project" value="UniProtKB-KW"/>
</dbReference>
<dbReference type="GO" id="GO:0006412">
    <property type="term" value="P:translation"/>
    <property type="evidence" value="ECO:0007669"/>
    <property type="project" value="UniProtKB-UniRule"/>
</dbReference>
<dbReference type="CDD" id="cd01433">
    <property type="entry name" value="Ribosomal_L16_L10e"/>
    <property type="match status" value="1"/>
</dbReference>
<dbReference type="FunFam" id="3.90.1170.10:FF:000001">
    <property type="entry name" value="50S ribosomal protein L16"/>
    <property type="match status" value="1"/>
</dbReference>
<dbReference type="Gene3D" id="3.90.1170.10">
    <property type="entry name" value="Ribosomal protein L10e/L16"/>
    <property type="match status" value="1"/>
</dbReference>
<dbReference type="HAMAP" id="MF_01342">
    <property type="entry name" value="Ribosomal_uL16"/>
    <property type="match status" value="1"/>
</dbReference>
<dbReference type="InterPro" id="IPR047873">
    <property type="entry name" value="Ribosomal_uL16"/>
</dbReference>
<dbReference type="InterPro" id="IPR000114">
    <property type="entry name" value="Ribosomal_uL16_bact-type"/>
</dbReference>
<dbReference type="InterPro" id="IPR020798">
    <property type="entry name" value="Ribosomal_uL16_CS"/>
</dbReference>
<dbReference type="InterPro" id="IPR016180">
    <property type="entry name" value="Ribosomal_uL16_dom"/>
</dbReference>
<dbReference type="InterPro" id="IPR036920">
    <property type="entry name" value="Ribosomal_uL16_sf"/>
</dbReference>
<dbReference type="NCBIfam" id="TIGR01164">
    <property type="entry name" value="rplP_bact"/>
    <property type="match status" value="1"/>
</dbReference>
<dbReference type="PANTHER" id="PTHR12220">
    <property type="entry name" value="50S/60S RIBOSOMAL PROTEIN L16"/>
    <property type="match status" value="1"/>
</dbReference>
<dbReference type="PANTHER" id="PTHR12220:SF13">
    <property type="entry name" value="LARGE RIBOSOMAL SUBUNIT PROTEIN UL16M"/>
    <property type="match status" value="1"/>
</dbReference>
<dbReference type="Pfam" id="PF00252">
    <property type="entry name" value="Ribosomal_L16"/>
    <property type="match status" value="1"/>
</dbReference>
<dbReference type="PRINTS" id="PR00060">
    <property type="entry name" value="RIBOSOMALL16"/>
</dbReference>
<dbReference type="SUPFAM" id="SSF54686">
    <property type="entry name" value="Ribosomal protein L16p/L10e"/>
    <property type="match status" value="1"/>
</dbReference>
<dbReference type="PROSITE" id="PS00586">
    <property type="entry name" value="RIBOSOMAL_L16_1"/>
    <property type="match status" value="1"/>
</dbReference>
<dbReference type="PROSITE" id="PS00701">
    <property type="entry name" value="RIBOSOMAL_L16_2"/>
    <property type="match status" value="1"/>
</dbReference>